<reference key="1">
    <citation type="journal article" date="1991" name="FEBS Lett.">
        <title>Cloning and sequence analysis of a human type A/B hnRNP protein.</title>
        <authorList>
            <person name="Khan F."/>
            <person name="Jaiswal A.K."/>
            <person name="Szer W."/>
        </authorList>
    </citation>
    <scope>NUCLEOTIDE SEQUENCE [MRNA] (ISOFORM 4)</scope>
</reference>
<reference key="2">
    <citation type="journal article" date="1997" name="J. Biol. Chem.">
        <title>Cloning of an Apobec-1-binding protein that also interacts with apolipoprotein B mRNA and evidence for its involvement in RNA editing.</title>
        <authorList>
            <person name="Lau P.P."/>
            <person name="Zhu H.J."/>
            <person name="Nakamuta M."/>
            <person name="Chan L."/>
        </authorList>
    </citation>
    <scope>NUCLEOTIDE SEQUENCE [MRNA] (ISOFORM 1)</scope>
    <source>
        <tissue>Placenta</tissue>
    </source>
</reference>
<reference key="3">
    <citation type="journal article" date="2004" name="Nat. Genet.">
        <title>Complete sequencing and characterization of 21,243 full-length human cDNAs.</title>
        <authorList>
            <person name="Ota T."/>
            <person name="Suzuki Y."/>
            <person name="Nishikawa T."/>
            <person name="Otsuki T."/>
            <person name="Sugiyama T."/>
            <person name="Irie R."/>
            <person name="Wakamatsu A."/>
            <person name="Hayashi K."/>
            <person name="Sato H."/>
            <person name="Nagai K."/>
            <person name="Kimura K."/>
            <person name="Makita H."/>
            <person name="Sekine M."/>
            <person name="Obayashi M."/>
            <person name="Nishi T."/>
            <person name="Shibahara T."/>
            <person name="Tanaka T."/>
            <person name="Ishii S."/>
            <person name="Yamamoto J."/>
            <person name="Saito K."/>
            <person name="Kawai Y."/>
            <person name="Isono Y."/>
            <person name="Nakamura Y."/>
            <person name="Nagahari K."/>
            <person name="Murakami K."/>
            <person name="Yasuda T."/>
            <person name="Iwayanagi T."/>
            <person name="Wagatsuma M."/>
            <person name="Shiratori A."/>
            <person name="Sudo H."/>
            <person name="Hosoiri T."/>
            <person name="Kaku Y."/>
            <person name="Kodaira H."/>
            <person name="Kondo H."/>
            <person name="Sugawara M."/>
            <person name="Takahashi M."/>
            <person name="Kanda K."/>
            <person name="Yokoi T."/>
            <person name="Furuya T."/>
            <person name="Kikkawa E."/>
            <person name="Omura Y."/>
            <person name="Abe K."/>
            <person name="Kamihara K."/>
            <person name="Katsuta N."/>
            <person name="Sato K."/>
            <person name="Tanikawa M."/>
            <person name="Yamazaki M."/>
            <person name="Ninomiya K."/>
            <person name="Ishibashi T."/>
            <person name="Yamashita H."/>
            <person name="Murakawa K."/>
            <person name="Fujimori K."/>
            <person name="Tanai H."/>
            <person name="Kimata M."/>
            <person name="Watanabe M."/>
            <person name="Hiraoka S."/>
            <person name="Chiba Y."/>
            <person name="Ishida S."/>
            <person name="Ono Y."/>
            <person name="Takiguchi S."/>
            <person name="Watanabe S."/>
            <person name="Yosida M."/>
            <person name="Hotuta T."/>
            <person name="Kusano J."/>
            <person name="Kanehori K."/>
            <person name="Takahashi-Fujii A."/>
            <person name="Hara H."/>
            <person name="Tanase T.-O."/>
            <person name="Nomura Y."/>
            <person name="Togiya S."/>
            <person name="Komai F."/>
            <person name="Hara R."/>
            <person name="Takeuchi K."/>
            <person name="Arita M."/>
            <person name="Imose N."/>
            <person name="Musashino K."/>
            <person name="Yuuki H."/>
            <person name="Oshima A."/>
            <person name="Sasaki N."/>
            <person name="Aotsuka S."/>
            <person name="Yoshikawa Y."/>
            <person name="Matsunawa H."/>
            <person name="Ichihara T."/>
            <person name="Shiohata N."/>
            <person name="Sano S."/>
            <person name="Moriya S."/>
            <person name="Momiyama H."/>
            <person name="Satoh N."/>
            <person name="Takami S."/>
            <person name="Terashima Y."/>
            <person name="Suzuki O."/>
            <person name="Nakagawa S."/>
            <person name="Senoh A."/>
            <person name="Mizoguchi H."/>
            <person name="Goto Y."/>
            <person name="Shimizu F."/>
            <person name="Wakebe H."/>
            <person name="Hishigaki H."/>
            <person name="Watanabe T."/>
            <person name="Sugiyama A."/>
            <person name="Takemoto M."/>
            <person name="Kawakami B."/>
            <person name="Yamazaki M."/>
            <person name="Watanabe K."/>
            <person name="Kumagai A."/>
            <person name="Itakura S."/>
            <person name="Fukuzumi Y."/>
            <person name="Fujimori Y."/>
            <person name="Komiyama M."/>
            <person name="Tashiro H."/>
            <person name="Tanigami A."/>
            <person name="Fujiwara T."/>
            <person name="Ono T."/>
            <person name="Yamada K."/>
            <person name="Fujii Y."/>
            <person name="Ozaki K."/>
            <person name="Hirao M."/>
            <person name="Ohmori Y."/>
            <person name="Kawabata A."/>
            <person name="Hikiji T."/>
            <person name="Kobatake N."/>
            <person name="Inagaki H."/>
            <person name="Ikema Y."/>
            <person name="Okamoto S."/>
            <person name="Okitani R."/>
            <person name="Kawakami T."/>
            <person name="Noguchi S."/>
            <person name="Itoh T."/>
            <person name="Shigeta K."/>
            <person name="Senba T."/>
            <person name="Matsumura K."/>
            <person name="Nakajima Y."/>
            <person name="Mizuno T."/>
            <person name="Morinaga M."/>
            <person name="Sasaki M."/>
            <person name="Togashi T."/>
            <person name="Oyama M."/>
            <person name="Hata H."/>
            <person name="Watanabe M."/>
            <person name="Komatsu T."/>
            <person name="Mizushima-Sugano J."/>
            <person name="Satoh T."/>
            <person name="Shirai Y."/>
            <person name="Takahashi Y."/>
            <person name="Nakagawa K."/>
            <person name="Okumura K."/>
            <person name="Nagase T."/>
            <person name="Nomura N."/>
            <person name="Kikuchi H."/>
            <person name="Masuho Y."/>
            <person name="Yamashita R."/>
            <person name="Nakai K."/>
            <person name="Yada T."/>
            <person name="Nakamura Y."/>
            <person name="Ohara O."/>
            <person name="Isogai T."/>
            <person name="Sugano S."/>
        </authorList>
    </citation>
    <scope>NUCLEOTIDE SEQUENCE [LARGE SCALE MRNA] (ISOFORMS 2 AND 3)</scope>
    <source>
        <tissue>Testis</tissue>
    </source>
</reference>
<reference key="4">
    <citation type="submission" date="2005-09" db="EMBL/GenBank/DDBJ databases">
        <authorList>
            <person name="Mural R.J."/>
            <person name="Istrail S."/>
            <person name="Sutton G.G."/>
            <person name="Florea L."/>
            <person name="Halpern A.L."/>
            <person name="Mobarry C.M."/>
            <person name="Lippert R."/>
            <person name="Walenz B."/>
            <person name="Shatkay H."/>
            <person name="Dew I."/>
            <person name="Miller J.R."/>
            <person name="Flanigan M.J."/>
            <person name="Edwards N.J."/>
            <person name="Bolanos R."/>
            <person name="Fasulo D."/>
            <person name="Halldorsson B.V."/>
            <person name="Hannenhalli S."/>
            <person name="Turner R."/>
            <person name="Yooseph S."/>
            <person name="Lu F."/>
            <person name="Nusskern D.R."/>
            <person name="Shue B.C."/>
            <person name="Zheng X.H."/>
            <person name="Zhong F."/>
            <person name="Delcher A.L."/>
            <person name="Huson D.H."/>
            <person name="Kravitz S.A."/>
            <person name="Mouchard L."/>
            <person name="Reinert K."/>
            <person name="Remington K.A."/>
            <person name="Clark A.G."/>
            <person name="Waterman M.S."/>
            <person name="Eichler E.E."/>
            <person name="Adams M.D."/>
            <person name="Hunkapiller M.W."/>
            <person name="Myers E.W."/>
            <person name="Venter J.C."/>
        </authorList>
    </citation>
    <scope>NUCLEOTIDE SEQUENCE [LARGE SCALE GENOMIC DNA]</scope>
</reference>
<reference key="5">
    <citation type="journal article" date="2004" name="Genome Res.">
        <title>The status, quality, and expansion of the NIH full-length cDNA project: the Mammalian Gene Collection (MGC).</title>
        <authorList>
            <consortium name="The MGC Project Team"/>
        </authorList>
    </citation>
    <scope>NUCLEOTIDE SEQUENCE [LARGE SCALE MRNA] (ISOFORMS 2 AND 3)</scope>
    <source>
        <tissue>Placenta</tissue>
        <tissue>Skin</tissue>
        <tissue>Uterus</tissue>
    </source>
</reference>
<reference key="6">
    <citation type="submission" date="2008-12" db="UniProtKB">
        <authorList>
            <person name="Bienvenut W.V."/>
            <person name="Lilla S."/>
            <person name="von Kriegsheim A."/>
            <person name="Lempens A."/>
            <person name="Kolch W."/>
        </authorList>
    </citation>
    <scope>PROTEIN SEQUENCE OF 71-101; 111-118; 170-190; 196-203 AND 233-248</scope>
    <scope>METHYLATION AT ARG-245</scope>
    <scope>IDENTIFICATION BY MASS SPECTROMETRY</scope>
    <source>
        <tissue>Ovarian carcinoma</tissue>
    </source>
</reference>
<reference key="7">
    <citation type="journal article" date="2003" name="Nature">
        <title>Proteomic characterization of the human centrosome by protein correlation profiling.</title>
        <authorList>
            <person name="Andersen J.S."/>
            <person name="Wilkinson C.J."/>
            <person name="Mayor T."/>
            <person name="Mortensen P."/>
            <person name="Nigg E.A."/>
            <person name="Mann M."/>
        </authorList>
    </citation>
    <scope>IDENTIFICATION BY MASS SPECTROMETRY</scope>
    <source>
        <tissue>Lymphoblast</tissue>
    </source>
</reference>
<reference key="8">
    <citation type="journal article" date="2004" name="Nat. Methods">
        <title>Identifying and quantifying in vivo methylation sites by heavy methyl SILAC.</title>
        <authorList>
            <person name="Ong S.E."/>
            <person name="Mittler G."/>
            <person name="Mann M."/>
        </authorList>
    </citation>
    <scope>METHYLATION [LARGE SCALE ANALYSIS] AT ARG-322</scope>
    <scope>IDENTIFICATION BY MASS SPECTROMETRY [LARGE SCALE ANALYSIS]</scope>
    <source>
        <tissue>Cervix carcinoma</tissue>
    </source>
</reference>
<reference key="9">
    <citation type="journal article" date="2006" name="Nat. Biotechnol.">
        <title>A probability-based approach for high-throughput protein phosphorylation analysis and site localization.</title>
        <authorList>
            <person name="Beausoleil S.A."/>
            <person name="Villen J."/>
            <person name="Gerber S.A."/>
            <person name="Rush J."/>
            <person name="Gygi S.P."/>
        </authorList>
    </citation>
    <scope>PHOSPHORYLATION [LARGE SCALE ANALYSIS] AT SER-242</scope>
    <scope>IDENTIFICATION BY MASS SPECTROMETRY [LARGE SCALE ANALYSIS]</scope>
    <source>
        <tissue>Cervix carcinoma</tissue>
    </source>
</reference>
<reference key="10">
    <citation type="journal article" date="2007" name="Mol. Cell. Proteomics">
        <title>Molecular composition of IMP1 ribonucleoprotein granules.</title>
        <authorList>
            <person name="Joeson L."/>
            <person name="Vikesaa J."/>
            <person name="Krogh A."/>
            <person name="Nielsen L.K."/>
            <person name="Hansen T."/>
            <person name="Borup R."/>
            <person name="Johnsen A.H."/>
            <person name="Christiansen J."/>
            <person name="Nielsen F.C."/>
        </authorList>
    </citation>
    <scope>IDENTIFICATION IN A MRNP GRANULE COMPLEX</scope>
    <scope>IDENTIFICATION BY MASS SPECTROMETRY</scope>
    <scope>SUBCELLULAR LOCATION</scope>
</reference>
<reference key="11">
    <citation type="journal article" date="2008" name="Mol. Cell">
        <title>Kinase-selective enrichment enables quantitative phosphoproteomics of the kinome across the cell cycle.</title>
        <authorList>
            <person name="Daub H."/>
            <person name="Olsen J.V."/>
            <person name="Bairlein M."/>
            <person name="Gnad F."/>
            <person name="Oppermann F.S."/>
            <person name="Korner R."/>
            <person name="Greff Z."/>
            <person name="Keri G."/>
            <person name="Stemmann O."/>
            <person name="Mann M."/>
        </authorList>
    </citation>
    <scope>IDENTIFICATION BY MASS SPECTROMETRY [LARGE SCALE ANALYSIS]</scope>
    <source>
        <tissue>Cervix carcinoma</tissue>
    </source>
</reference>
<reference key="12">
    <citation type="journal article" date="2008" name="Proc. Natl. Acad. Sci. U.S.A.">
        <title>A quantitative atlas of mitotic phosphorylation.</title>
        <authorList>
            <person name="Dephoure N."/>
            <person name="Zhou C."/>
            <person name="Villen J."/>
            <person name="Beausoleil S.A."/>
            <person name="Bakalarski C.E."/>
            <person name="Elledge S.J."/>
            <person name="Gygi S.P."/>
        </authorList>
    </citation>
    <scope>PHOSPHORYLATION [LARGE SCALE ANALYSIS] AT SER-242</scope>
    <scope>IDENTIFICATION BY MASS SPECTROMETRY [LARGE SCALE ANALYSIS]</scope>
    <source>
        <tissue>Cervix carcinoma</tissue>
    </source>
</reference>
<reference key="13">
    <citation type="journal article" date="2009" name="Anal. Chem.">
        <title>Lys-N and trypsin cover complementary parts of the phosphoproteome in a refined SCX-based approach.</title>
        <authorList>
            <person name="Gauci S."/>
            <person name="Helbig A.O."/>
            <person name="Slijper M."/>
            <person name="Krijgsveld J."/>
            <person name="Heck A.J."/>
            <person name="Mohammed S."/>
        </authorList>
    </citation>
    <scope>IDENTIFICATION BY MASS SPECTROMETRY [LARGE SCALE ANALYSIS]</scope>
</reference>
<reference key="14">
    <citation type="journal article" date="2009" name="Science">
        <title>Lysine acetylation targets protein complexes and co-regulates major cellular functions.</title>
        <authorList>
            <person name="Choudhary C."/>
            <person name="Kumar C."/>
            <person name="Gnad F."/>
            <person name="Nielsen M.L."/>
            <person name="Rehman M."/>
            <person name="Walther T.C."/>
            <person name="Olsen J.V."/>
            <person name="Mann M."/>
        </authorList>
    </citation>
    <scope>ACETYLATION [LARGE SCALE ANALYSIS] AT LYS-271 (ISOFORM 3)</scope>
    <scope>ACETYLATION [LARGE SCALE ANALYSIS] AT LYS-272 (ISOFORM 4)</scope>
    <scope>IDENTIFICATION BY MASS SPECTROMETRY [LARGE SCALE ANALYSIS]</scope>
</reference>
<reference key="15">
    <citation type="journal article" date="2010" name="Sci. Signal.">
        <title>Quantitative phosphoproteomics reveals widespread full phosphorylation site occupancy during mitosis.</title>
        <authorList>
            <person name="Olsen J.V."/>
            <person name="Vermeulen M."/>
            <person name="Santamaria A."/>
            <person name="Kumar C."/>
            <person name="Miller M.L."/>
            <person name="Jensen L.J."/>
            <person name="Gnad F."/>
            <person name="Cox J."/>
            <person name="Jensen T.S."/>
            <person name="Nigg E.A."/>
            <person name="Brunak S."/>
            <person name="Mann M."/>
        </authorList>
    </citation>
    <scope>PHOSPHORYLATION [LARGE SCALE ANALYSIS] AT SER-242</scope>
    <scope>PHOSPHORYLATION [LARGE SCALE ANALYSIS] AT SER-255 (ISOFORM 3)</scope>
    <scope>PHOSPHORYLATION [LARGE SCALE ANALYSIS] AT SER-256 (ISOFORM 4)</scope>
    <scope>IDENTIFICATION BY MASS SPECTROMETRY [LARGE SCALE ANALYSIS]</scope>
    <source>
        <tissue>Cervix carcinoma</tissue>
    </source>
</reference>
<reference key="16">
    <citation type="journal article" date="2011" name="BMC Syst. Biol.">
        <title>Initial characterization of the human central proteome.</title>
        <authorList>
            <person name="Burkard T.R."/>
            <person name="Planyavsky M."/>
            <person name="Kaupe I."/>
            <person name="Breitwieser F.P."/>
            <person name="Buerckstuemmer T."/>
            <person name="Bennett K.L."/>
            <person name="Superti-Furga G."/>
            <person name="Colinge J."/>
        </authorList>
    </citation>
    <scope>IDENTIFICATION BY MASS SPECTROMETRY [LARGE SCALE ANALYSIS]</scope>
</reference>
<reference key="17">
    <citation type="journal article" date="2011" name="Sci. Signal.">
        <title>System-wide temporal characterization of the proteome and phosphoproteome of human embryonic stem cell differentiation.</title>
        <authorList>
            <person name="Rigbolt K.T."/>
            <person name="Prokhorova T.A."/>
            <person name="Akimov V."/>
            <person name="Henningsen J."/>
            <person name="Johansen P.T."/>
            <person name="Kratchmarova I."/>
            <person name="Kassem M."/>
            <person name="Mann M."/>
            <person name="Olsen J.V."/>
            <person name="Blagoev B."/>
        </authorList>
    </citation>
    <scope>PHOSPHORYLATION [LARGE SCALE ANALYSIS] AT SER-242</scope>
    <scope>PHOSPHORYLATION [LARGE SCALE ANALYSIS] AT SER-255 (ISOFORM 3)</scope>
    <scope>PHOSPHORYLATION [LARGE SCALE ANALYSIS] AT SER-256 (ISOFORM 4)</scope>
    <scope>IDENTIFICATION BY MASS SPECTROMETRY [LARGE SCALE ANALYSIS]</scope>
</reference>
<reference key="18">
    <citation type="journal article" date="2013" name="J. Proteome Res.">
        <title>Toward a comprehensive characterization of a human cancer cell phosphoproteome.</title>
        <authorList>
            <person name="Zhou H."/>
            <person name="Di Palma S."/>
            <person name="Preisinger C."/>
            <person name="Peng M."/>
            <person name="Polat A.N."/>
            <person name="Heck A.J."/>
            <person name="Mohammed S."/>
        </authorList>
    </citation>
    <scope>PHOSPHORYLATION [LARGE SCALE ANALYSIS] AT SER-81 AND SER-242</scope>
    <scope>IDENTIFICATION BY MASS SPECTROMETRY [LARGE SCALE ANALYSIS]</scope>
    <source>
        <tissue>Cervix carcinoma</tissue>
        <tissue>Erythroleukemia</tissue>
    </source>
</reference>
<reference key="19">
    <citation type="journal article" date="2014" name="J. Proteomics">
        <title>An enzyme assisted RP-RPLC approach for in-depth analysis of human liver phosphoproteome.</title>
        <authorList>
            <person name="Bian Y."/>
            <person name="Song C."/>
            <person name="Cheng K."/>
            <person name="Dong M."/>
            <person name="Wang F."/>
            <person name="Huang J."/>
            <person name="Sun D."/>
            <person name="Wang L."/>
            <person name="Ye M."/>
            <person name="Zou H."/>
        </authorList>
    </citation>
    <scope>PHOSPHORYLATION [LARGE SCALE ANALYSIS] AT SER-81</scope>
    <scope>IDENTIFICATION BY MASS SPECTROMETRY [LARGE SCALE ANALYSIS]</scope>
    <source>
        <tissue>Liver</tissue>
    </source>
</reference>
<reference key="20">
    <citation type="journal article" date="2014" name="Mol. Cell. Proteomics">
        <title>Immunoaffinity enrichment and mass spectrometry analysis of protein methylation.</title>
        <authorList>
            <person name="Guo A."/>
            <person name="Gu H."/>
            <person name="Zhou J."/>
            <person name="Mulhern D."/>
            <person name="Wang Y."/>
            <person name="Lee K.A."/>
            <person name="Yang V."/>
            <person name="Aguiar M."/>
            <person name="Kornhauser J."/>
            <person name="Jia X."/>
            <person name="Ren J."/>
            <person name="Beausoleil S.A."/>
            <person name="Silva J.C."/>
            <person name="Vemulapalli V."/>
            <person name="Bedford M.T."/>
            <person name="Comb M.J."/>
        </authorList>
    </citation>
    <scope>METHYLATION [LARGE SCALE ANALYSIS] AT ARG-322</scope>
    <scope>METHYLATION [LARGE SCALE ANALYSIS] AT ARG-250 AND ARG-253 (ISOFORM 3)</scope>
    <scope>METHYLATION [LARGE SCALE ANALYSIS] AT ARG-251 AND ARG-254 (ISOFORM 4)</scope>
    <scope>IDENTIFICATION BY MASS SPECTROMETRY [LARGE SCALE ANALYSIS]</scope>
    <source>
        <tissue>Colon carcinoma</tissue>
    </source>
</reference>
<reference key="21">
    <citation type="journal article" date="2017" name="Nat. Struct. Mol. Biol.">
        <title>Site-specific mapping of the human SUMO proteome reveals co-modification with phosphorylation.</title>
        <authorList>
            <person name="Hendriks I.A."/>
            <person name="Lyon D."/>
            <person name="Young C."/>
            <person name="Jensen L.J."/>
            <person name="Vertegaal A.C."/>
            <person name="Nielsen M.L."/>
        </authorList>
    </citation>
    <scope>SUMOYLATION [LARGE SCALE ANALYSIS] AT LYS-130 AND LYS-203</scope>
    <scope>IDENTIFICATION BY MASS SPECTROMETRY [LARGE SCALE ANALYSIS]</scope>
</reference>
<evidence type="ECO:0000250" key="1">
    <source>
        <dbReference type="UniProtKB" id="Q99020"/>
    </source>
</evidence>
<evidence type="ECO:0000255" key="2">
    <source>
        <dbReference type="PROSITE-ProRule" id="PRU00176"/>
    </source>
</evidence>
<evidence type="ECO:0000256" key="3">
    <source>
        <dbReference type="SAM" id="MobiDB-lite"/>
    </source>
</evidence>
<evidence type="ECO:0000269" key="4">
    <source>
    </source>
</evidence>
<evidence type="ECO:0000269" key="5">
    <source ref="6"/>
</evidence>
<evidence type="ECO:0000303" key="6">
    <source>
    </source>
</evidence>
<evidence type="ECO:0000303" key="7">
    <source>
    </source>
</evidence>
<evidence type="ECO:0000303" key="8">
    <source>
    </source>
</evidence>
<evidence type="ECO:0000305" key="9"/>
<evidence type="ECO:0007744" key="10">
    <source>
    </source>
</evidence>
<evidence type="ECO:0007744" key="11">
    <source>
    </source>
</evidence>
<evidence type="ECO:0007744" key="12">
    <source>
    </source>
</evidence>
<evidence type="ECO:0007744" key="13">
    <source>
    </source>
</evidence>
<evidence type="ECO:0007744" key="14">
    <source>
    </source>
</evidence>
<evidence type="ECO:0007744" key="15">
    <source>
    </source>
</evidence>
<evidence type="ECO:0007744" key="16">
    <source>
    </source>
</evidence>
<evidence type="ECO:0007744" key="17">
    <source>
    </source>
</evidence>
<evidence type="ECO:0007744" key="18">
    <source>
    </source>
</evidence>
<evidence type="ECO:0007744" key="19">
    <source>
    </source>
</evidence>
<evidence type="ECO:0007829" key="20">
    <source>
        <dbReference type="PDB" id="3S7R"/>
    </source>
</evidence>
<dbReference type="EMBL" id="M65028">
    <property type="protein sequence ID" value="AAA36575.1"/>
    <property type="status" value="ALT_FRAME"/>
    <property type="molecule type" value="mRNA"/>
</dbReference>
<dbReference type="EMBL" id="U76713">
    <property type="protein sequence ID" value="AAC50956.1"/>
    <property type="status" value="ALT_FRAME"/>
    <property type="molecule type" value="mRNA"/>
</dbReference>
<dbReference type="EMBL" id="AK054600">
    <property type="protein sequence ID" value="BAG51397.1"/>
    <property type="molecule type" value="mRNA"/>
</dbReference>
<dbReference type="EMBL" id="AK097657">
    <property type="protein sequence ID" value="BAC05134.1"/>
    <property type="molecule type" value="mRNA"/>
</dbReference>
<dbReference type="EMBL" id="CH471165">
    <property type="protein sequence ID" value="EAW53843.1"/>
    <property type="molecule type" value="Genomic_DNA"/>
</dbReference>
<dbReference type="EMBL" id="CH471165">
    <property type="protein sequence ID" value="EAW53844.1"/>
    <property type="molecule type" value="Genomic_DNA"/>
</dbReference>
<dbReference type="EMBL" id="CH471165">
    <property type="protein sequence ID" value="EAW53845.1"/>
    <property type="molecule type" value="Genomic_DNA"/>
</dbReference>
<dbReference type="EMBL" id="BC001616">
    <property type="protein sequence ID" value="AAH01616.1"/>
    <property type="molecule type" value="mRNA"/>
</dbReference>
<dbReference type="EMBL" id="BC002625">
    <property type="protein sequence ID" value="AAH02625.1"/>
    <property type="molecule type" value="mRNA"/>
</dbReference>
<dbReference type="EMBL" id="BC004561">
    <property type="protein sequence ID" value="AAH04561.1"/>
    <property type="molecule type" value="mRNA"/>
</dbReference>
<dbReference type="EMBL" id="BC009359">
    <property type="protein sequence ID" value="AAH09359.1"/>
    <property type="molecule type" value="mRNA"/>
</dbReference>
<dbReference type="EMBL" id="BC036708">
    <property type="protein sequence ID" value="AAH36708.1"/>
    <property type="molecule type" value="mRNA"/>
</dbReference>
<dbReference type="CCDS" id="CCDS34309.1">
    <molecule id="Q99729-2"/>
</dbReference>
<dbReference type="CCDS" id="CCDS34310.1">
    <molecule id="Q99729-3"/>
</dbReference>
<dbReference type="PIR" id="S17563">
    <property type="entry name" value="S17563"/>
</dbReference>
<dbReference type="RefSeq" id="NP_004490.2">
    <molecule id="Q99729-3"/>
    <property type="nucleotide sequence ID" value="NM_004499.4"/>
</dbReference>
<dbReference type="RefSeq" id="NP_112556.2">
    <molecule id="Q99729-2"/>
    <property type="nucleotide sequence ID" value="NM_031266.3"/>
</dbReference>
<dbReference type="RefSeq" id="XP_047273094.1">
    <molecule id="Q99729-2"/>
    <property type="nucleotide sequence ID" value="XM_047417138.1"/>
</dbReference>
<dbReference type="RefSeq" id="XP_047273095.1">
    <molecule id="Q99729-3"/>
    <property type="nucleotide sequence ID" value="XM_047417139.1"/>
</dbReference>
<dbReference type="PDB" id="3S7R">
    <property type="method" value="X-ray"/>
    <property type="resolution" value="2.15 A"/>
    <property type="chains" value="A/B=59-144"/>
</dbReference>
<dbReference type="PDBsum" id="3S7R"/>
<dbReference type="SMR" id="Q99729"/>
<dbReference type="BioGRID" id="109423">
    <property type="interactions" value="376"/>
</dbReference>
<dbReference type="ComplexPortal" id="CPX-1097">
    <property type="entry name" value="C-to-U editosome complex"/>
</dbReference>
<dbReference type="CORUM" id="Q99729"/>
<dbReference type="DIP" id="DIP-50394N"/>
<dbReference type="FunCoup" id="Q99729">
    <property type="interactions" value="2783"/>
</dbReference>
<dbReference type="IntAct" id="Q99729">
    <property type="interactions" value="144"/>
</dbReference>
<dbReference type="MINT" id="Q99729"/>
<dbReference type="STRING" id="9606.ENSP00000425031"/>
<dbReference type="GlyConnect" id="1313">
    <molecule id="Q99729-2"/>
    <property type="glycosylation" value="2 N-Linked glycans (1 site)"/>
</dbReference>
<dbReference type="GlyGen" id="Q99729">
    <property type="glycosylation" value="1 site, 1 O-linked glycan (1 site)"/>
</dbReference>
<dbReference type="iPTMnet" id="Q99729"/>
<dbReference type="MetOSite" id="Q99729"/>
<dbReference type="PhosphoSitePlus" id="Q99729"/>
<dbReference type="SwissPalm" id="Q99729"/>
<dbReference type="BioMuta" id="HNRNPAB"/>
<dbReference type="DMDM" id="158523286"/>
<dbReference type="jPOST" id="Q99729"/>
<dbReference type="MassIVE" id="Q99729"/>
<dbReference type="PaxDb" id="9606-ENSP00000351108"/>
<dbReference type="PeptideAtlas" id="Q99729"/>
<dbReference type="ProteomicsDB" id="78443">
    <molecule id="Q99729-1"/>
</dbReference>
<dbReference type="ProteomicsDB" id="78444">
    <molecule id="Q99729-2"/>
</dbReference>
<dbReference type="ProteomicsDB" id="78445">
    <molecule id="Q99729-3"/>
</dbReference>
<dbReference type="ProteomicsDB" id="78446">
    <molecule id="Q99729-4"/>
</dbReference>
<dbReference type="Pumba" id="Q99729"/>
<dbReference type="Antibodypedia" id="17556">
    <property type="antibodies" value="148 antibodies from 23 providers"/>
</dbReference>
<dbReference type="DNASU" id="3182"/>
<dbReference type="Ensembl" id="ENST00000355836.9">
    <molecule id="Q99729-3"/>
    <property type="protein sequence ID" value="ENSP00000348093.5"/>
    <property type="gene ID" value="ENSG00000197451.12"/>
</dbReference>
<dbReference type="Ensembl" id="ENST00000358344.8">
    <molecule id="Q99729-2"/>
    <property type="protein sequence ID" value="ENSP00000351108.3"/>
    <property type="gene ID" value="ENSG00000197451.12"/>
</dbReference>
<dbReference type="Ensembl" id="ENST00000504898.5">
    <molecule id="Q99729-2"/>
    <property type="protein sequence ID" value="ENSP00000425031.1"/>
    <property type="gene ID" value="ENSG00000197451.12"/>
</dbReference>
<dbReference type="Ensembl" id="ENST00000506259.5">
    <molecule id="Q99729-3"/>
    <property type="protein sequence ID" value="ENSP00000427465.1"/>
    <property type="gene ID" value="ENSG00000197451.12"/>
</dbReference>
<dbReference type="GeneID" id="3182"/>
<dbReference type="KEGG" id="hsa:3182"/>
<dbReference type="MANE-Select" id="ENST00000358344.8">
    <molecule id="Q99729-2"/>
    <property type="protein sequence ID" value="ENSP00000351108.3"/>
    <property type="RefSeq nucleotide sequence ID" value="NM_031266.3"/>
    <property type="RefSeq protein sequence ID" value="NP_112556.2"/>
</dbReference>
<dbReference type="UCSC" id="uc003miu.4">
    <molecule id="Q99729-1"/>
    <property type="organism name" value="human"/>
</dbReference>
<dbReference type="AGR" id="HGNC:5034"/>
<dbReference type="CTD" id="3182"/>
<dbReference type="DisGeNET" id="3182"/>
<dbReference type="GeneCards" id="HNRNPAB"/>
<dbReference type="HGNC" id="HGNC:5034">
    <property type="gene designation" value="HNRNPAB"/>
</dbReference>
<dbReference type="HPA" id="ENSG00000197451">
    <property type="expression patterns" value="Low tissue specificity"/>
</dbReference>
<dbReference type="MIM" id="602688">
    <property type="type" value="gene"/>
</dbReference>
<dbReference type="neXtProt" id="NX_Q99729"/>
<dbReference type="OpenTargets" id="ENSG00000197451"/>
<dbReference type="PharmGKB" id="PA162391196"/>
<dbReference type="VEuPathDB" id="HostDB:ENSG00000197451"/>
<dbReference type="eggNOG" id="KOG0118">
    <property type="taxonomic scope" value="Eukaryota"/>
</dbReference>
<dbReference type="GeneTree" id="ENSGT00940000154735"/>
<dbReference type="HOGENOM" id="CLU_012062_1_1_1"/>
<dbReference type="InParanoid" id="Q99729"/>
<dbReference type="OMA" id="NQGYNYW"/>
<dbReference type="OrthoDB" id="1875751at2759"/>
<dbReference type="PAN-GO" id="Q99729">
    <property type="GO annotations" value="3 GO annotations based on evolutionary models"/>
</dbReference>
<dbReference type="PhylomeDB" id="Q99729"/>
<dbReference type="TreeFam" id="TF314808"/>
<dbReference type="PathwayCommons" id="Q99729"/>
<dbReference type="SignaLink" id="Q99729"/>
<dbReference type="BioGRID-ORCS" id="3182">
    <property type="hits" value="22 hits in 1161 CRISPR screens"/>
</dbReference>
<dbReference type="CD-CODE" id="232F8A39">
    <property type="entry name" value="P-body"/>
</dbReference>
<dbReference type="CD-CODE" id="91857CE7">
    <property type="entry name" value="Nucleolus"/>
</dbReference>
<dbReference type="CD-CODE" id="DEE660B4">
    <property type="entry name" value="Stress granule"/>
</dbReference>
<dbReference type="CD-CODE" id="F85A2E29">
    <property type="entry name" value="IMP1 RNP granule"/>
</dbReference>
<dbReference type="ChiTaRS" id="HNRNPAB">
    <property type="organism name" value="human"/>
</dbReference>
<dbReference type="EvolutionaryTrace" id="Q99729"/>
<dbReference type="GeneWiki" id="HNRPAB"/>
<dbReference type="GenomeRNAi" id="3182"/>
<dbReference type="Pharos" id="Q99729">
    <property type="development level" value="Tbio"/>
</dbReference>
<dbReference type="PRO" id="PR:Q99729"/>
<dbReference type="Proteomes" id="UP000005640">
    <property type="component" value="Chromosome 5"/>
</dbReference>
<dbReference type="RNAct" id="Q99729">
    <property type="molecule type" value="protein"/>
</dbReference>
<dbReference type="Bgee" id="ENSG00000197451">
    <property type="expression patterns" value="Expressed in mucosa of sigmoid colon and 208 other cell types or tissues"/>
</dbReference>
<dbReference type="ExpressionAtlas" id="Q99729">
    <property type="expression patterns" value="baseline and differential"/>
</dbReference>
<dbReference type="GO" id="GO:0000785">
    <property type="term" value="C:chromatin"/>
    <property type="evidence" value="ECO:0000318"/>
    <property type="project" value="GO_Central"/>
</dbReference>
<dbReference type="GO" id="GO:0005737">
    <property type="term" value="C:cytoplasm"/>
    <property type="evidence" value="ECO:0000250"/>
    <property type="project" value="HGNC-UCL"/>
</dbReference>
<dbReference type="GO" id="GO:0030425">
    <property type="term" value="C:dendrite"/>
    <property type="evidence" value="ECO:0007669"/>
    <property type="project" value="Ensembl"/>
</dbReference>
<dbReference type="GO" id="GO:0045293">
    <property type="term" value="C:mRNA editing complex"/>
    <property type="evidence" value="ECO:0000303"/>
    <property type="project" value="ComplexPortal"/>
</dbReference>
<dbReference type="GO" id="GO:0071598">
    <property type="term" value="C:neuronal ribonucleoprotein granule"/>
    <property type="evidence" value="ECO:0007669"/>
    <property type="project" value="Ensembl"/>
</dbReference>
<dbReference type="GO" id="GO:0005654">
    <property type="term" value="C:nucleoplasm"/>
    <property type="evidence" value="ECO:0000314"/>
    <property type="project" value="HPA"/>
</dbReference>
<dbReference type="GO" id="GO:0005634">
    <property type="term" value="C:nucleus"/>
    <property type="evidence" value="ECO:0000314"/>
    <property type="project" value="ComplexPortal"/>
</dbReference>
<dbReference type="GO" id="GO:1990904">
    <property type="term" value="C:ribonucleoprotein complex"/>
    <property type="evidence" value="ECO:0000314"/>
    <property type="project" value="UniProtKB"/>
</dbReference>
<dbReference type="GO" id="GO:0090575">
    <property type="term" value="C:RNA polymerase II transcription regulator complex"/>
    <property type="evidence" value="ECO:0000250"/>
    <property type="project" value="BHF-UCL"/>
</dbReference>
<dbReference type="GO" id="GO:0003729">
    <property type="term" value="F:mRNA binding"/>
    <property type="evidence" value="ECO:0000304"/>
    <property type="project" value="ProtInc"/>
</dbReference>
<dbReference type="GO" id="GO:0044877">
    <property type="term" value="F:protein-containing complex binding"/>
    <property type="evidence" value="ECO:0007669"/>
    <property type="project" value="Ensembl"/>
</dbReference>
<dbReference type="GO" id="GO:0003723">
    <property type="term" value="F:RNA binding"/>
    <property type="evidence" value="ECO:0007005"/>
    <property type="project" value="UniProtKB"/>
</dbReference>
<dbReference type="GO" id="GO:1990837">
    <property type="term" value="F:sequence-specific double-stranded DNA binding"/>
    <property type="evidence" value="ECO:0007669"/>
    <property type="project" value="Ensembl"/>
</dbReference>
<dbReference type="GO" id="GO:0071230">
    <property type="term" value="P:cellular response to amino acid stimulus"/>
    <property type="evidence" value="ECO:0007669"/>
    <property type="project" value="Ensembl"/>
</dbReference>
<dbReference type="GO" id="GO:0141166">
    <property type="term" value="P:chromosomal 5-methylcytosine DNA demethylation pathway"/>
    <property type="evidence" value="ECO:0000303"/>
    <property type="project" value="ComplexPortal"/>
</dbReference>
<dbReference type="GO" id="GO:0001837">
    <property type="term" value="P:epithelial to mesenchymal transition"/>
    <property type="evidence" value="ECO:0000250"/>
    <property type="project" value="HGNC-UCL"/>
</dbReference>
<dbReference type="GO" id="GO:0016556">
    <property type="term" value="P:mRNA modification"/>
    <property type="evidence" value="ECO:0000314"/>
    <property type="project" value="ComplexPortal"/>
</dbReference>
<dbReference type="GO" id="GO:2000623">
    <property type="term" value="P:negative regulation of nuclear-transcribed mRNA catabolic process, nonsense-mediated decay"/>
    <property type="evidence" value="ECO:0000314"/>
    <property type="project" value="ComplexPortal"/>
</dbReference>
<dbReference type="GO" id="GO:0045893">
    <property type="term" value="P:positive regulation of DNA-templated transcription"/>
    <property type="evidence" value="ECO:0000250"/>
    <property type="project" value="HGNC-UCL"/>
</dbReference>
<dbReference type="GO" id="GO:0010468">
    <property type="term" value="P:regulation of gene expression"/>
    <property type="evidence" value="ECO:0000318"/>
    <property type="project" value="GO_Central"/>
</dbReference>
<dbReference type="GO" id="GO:1904580">
    <property type="term" value="P:regulation of intracellular mRNA localization"/>
    <property type="evidence" value="ECO:0007669"/>
    <property type="project" value="Ensembl"/>
</dbReference>
<dbReference type="CDD" id="cd12757">
    <property type="entry name" value="RRM1_hnRNPAB"/>
    <property type="match status" value="1"/>
</dbReference>
<dbReference type="FunFam" id="3.30.70.330:FF:000186">
    <property type="entry name" value="heterogeneous nuclear ribonucleoprotein A/B isoform X1"/>
    <property type="match status" value="1"/>
</dbReference>
<dbReference type="FunFam" id="3.30.70.330:FF:000030">
    <property type="entry name" value="Heterogeneous nuclear ribonucleoprotein d0 isoform"/>
    <property type="match status" value="1"/>
</dbReference>
<dbReference type="Gene3D" id="3.30.70.330">
    <property type="match status" value="2"/>
</dbReference>
<dbReference type="InterPro" id="IPR012956">
    <property type="entry name" value="CARG-binding_factor_N"/>
</dbReference>
<dbReference type="InterPro" id="IPR034846">
    <property type="entry name" value="hnRNPAB_RRM1"/>
</dbReference>
<dbReference type="InterPro" id="IPR012677">
    <property type="entry name" value="Nucleotide-bd_a/b_plait_sf"/>
</dbReference>
<dbReference type="InterPro" id="IPR035979">
    <property type="entry name" value="RBD_domain_sf"/>
</dbReference>
<dbReference type="InterPro" id="IPR000504">
    <property type="entry name" value="RRM_dom"/>
</dbReference>
<dbReference type="PANTHER" id="PTHR48033:SF1">
    <property type="entry name" value="HETEROGENEOUS NUCLEAR RIBONUCLEOPROTEIN A_B"/>
    <property type="match status" value="1"/>
</dbReference>
<dbReference type="PANTHER" id="PTHR48033">
    <property type="entry name" value="RNA-BINDING (RRM/RBD/RNP MOTIFS) FAMILY PROTEIN"/>
    <property type="match status" value="1"/>
</dbReference>
<dbReference type="Pfam" id="PF08143">
    <property type="entry name" value="CBFNT"/>
    <property type="match status" value="1"/>
</dbReference>
<dbReference type="Pfam" id="PF00076">
    <property type="entry name" value="RRM_1"/>
    <property type="match status" value="2"/>
</dbReference>
<dbReference type="SMART" id="SM00360">
    <property type="entry name" value="RRM"/>
    <property type="match status" value="2"/>
</dbReference>
<dbReference type="SUPFAM" id="SSF54928">
    <property type="entry name" value="RNA-binding domain, RBD"/>
    <property type="match status" value="2"/>
</dbReference>
<dbReference type="PROSITE" id="PS50102">
    <property type="entry name" value="RRM"/>
    <property type="match status" value="2"/>
</dbReference>
<proteinExistence type="evidence at protein level"/>
<comment type="function">
    <text>Binds single-stranded RNA. Has a high affinity for G-rich and U-rich regions of hnRNA. Also binds to APOB mRNA transcripts around the RNA editing site.</text>
</comment>
<comment type="subunit">
    <text evidence="4">Identified in a IGF2BP1-dependent mRNP granule complex containing untranslated mRNAs. Interacts with APOBEC1.</text>
</comment>
<comment type="interaction">
    <interactant intactId="EBI-1044873">
        <id>Q99729</id>
    </interactant>
    <interactant intactId="EBI-299649">
        <id>P22626</id>
        <label>HNRNPA2B1</label>
    </interactant>
    <organismsDiffer>false</organismsDiffer>
    <experiments>2</experiments>
</comment>
<comment type="interaction">
    <interactant intactId="EBI-1044873">
        <id>Q99729</id>
    </interactant>
    <interactant intactId="EBI-744603">
        <id>Q15637</id>
        <label>SF1</label>
    </interactant>
    <organismsDiffer>false</organismsDiffer>
    <experiments>4</experiments>
</comment>
<comment type="interaction">
    <interactant intactId="EBI-1044873">
        <id>Q99729</id>
    </interactant>
    <interactant intactId="EBI-2337775">
        <id>Q9H3D4</id>
        <label>TP63</label>
    </interactant>
    <organismsDiffer>false</organismsDiffer>
    <experiments>3</experiments>
</comment>
<comment type="interaction">
    <interactant intactId="EBI-1044873">
        <id>Q99729</id>
    </interactant>
    <interactant intactId="EBI-2400586">
        <id>Q9H3D4-1</id>
        <label>TP63</label>
    </interactant>
    <organismsDiffer>false</organismsDiffer>
    <experiments>2</experiments>
</comment>
<comment type="interaction">
    <interactant intactId="EBI-1044873">
        <id>Q99729</id>
    </interactant>
    <interactant intactId="EBI-6481107">
        <id>Q9H3D4-2</id>
        <label>TP63</label>
    </interactant>
    <organismsDiffer>false</organismsDiffer>
    <experiments>2</experiments>
</comment>
<comment type="subcellular location">
    <subcellularLocation>
        <location evidence="4">Nucleus</location>
    </subcellularLocation>
    <subcellularLocation>
        <location evidence="4">Cytoplasm</location>
    </subcellularLocation>
    <text>Localized in cytoplasmic mRNP granules containing untranslated mRNAs.</text>
</comment>
<comment type="alternative products">
    <event type="alternative splicing"/>
    <isoform>
        <id>Q99729-1</id>
        <name>1</name>
        <sequence type="displayed"/>
    </isoform>
    <isoform>
        <id>Q99729-2</id>
        <name>2</name>
        <sequence type="described" ref="VSP_007826 VSP_007828"/>
    </isoform>
    <isoform>
        <id>Q99729-3</id>
        <name>3</name>
        <sequence type="described" ref="VSP_007826 VSP_007828 VSP_007829"/>
    </isoform>
    <isoform>
        <id>Q99729-4</id>
        <name>4</name>
        <sequence type="described" ref="VSP_007826 VSP_007829"/>
    </isoform>
</comment>
<comment type="tissue specificity">
    <text>Ubiquitous.</text>
</comment>
<comment type="PTM">
    <text>Dimethylation at Arg-322 is probably asymmetric.</text>
</comment>
<comment type="sequence caution" evidence="9">
    <conflict type="frameshift">
        <sequence resource="EMBL-CDS" id="AAC50956"/>
    </conflict>
</comment>
<comment type="sequence caution" evidence="9">
    <molecule>Isoform 4</molecule>
    <conflict type="frameshift">
        <sequence resource="EMBL-CDS" id="AAA36575"/>
    </conflict>
</comment>
<gene>
    <name type="primary">HNRNPAB</name>
    <name type="synonym">ABBP1</name>
    <name type="synonym">HNRPAB</name>
</gene>
<organism>
    <name type="scientific">Homo sapiens</name>
    <name type="common">Human</name>
    <dbReference type="NCBI Taxonomy" id="9606"/>
    <lineage>
        <taxon>Eukaryota</taxon>
        <taxon>Metazoa</taxon>
        <taxon>Chordata</taxon>
        <taxon>Craniata</taxon>
        <taxon>Vertebrata</taxon>
        <taxon>Euteleostomi</taxon>
        <taxon>Mammalia</taxon>
        <taxon>Eutheria</taxon>
        <taxon>Euarchontoglires</taxon>
        <taxon>Primates</taxon>
        <taxon>Haplorrhini</taxon>
        <taxon>Catarrhini</taxon>
        <taxon>Hominidae</taxon>
        <taxon>Homo</taxon>
    </lineage>
</organism>
<accession>Q99729</accession>
<accession>B3KNN5</accession>
<accession>D3DWP7</accession>
<accession>Q04150</accession>
<accession>Q8N7U3</accession>
<accession>Q9BQ99</accession>
<keyword id="KW-0002">3D-structure</keyword>
<keyword id="KW-0007">Acetylation</keyword>
<keyword id="KW-0025">Alternative splicing</keyword>
<keyword id="KW-0963">Cytoplasm</keyword>
<keyword id="KW-0903">Direct protein sequencing</keyword>
<keyword id="KW-1017">Isopeptide bond</keyword>
<keyword id="KW-0488">Methylation</keyword>
<keyword id="KW-0539">Nucleus</keyword>
<keyword id="KW-0597">Phosphoprotein</keyword>
<keyword id="KW-1267">Proteomics identification</keyword>
<keyword id="KW-1185">Reference proteome</keyword>
<keyword id="KW-0677">Repeat</keyword>
<keyword id="KW-0694">RNA-binding</keyword>
<keyword id="KW-0832">Ubl conjugation</keyword>
<sequence>MSEAGEEQPMETTGATENGHEAVPEASRGRGWTGAAAGAGGATAAPPSGNQNGAEGDQINASKNEEDAGKMFVGGLSWDTSKKDLKDYFTKFGEVVDCTIKMDPNTGRSRGFGFILFKDAASVEKVLDQKEHRLDGRVIDPKKAMAMKKDPVKKIFVGGLNPESPTEEKIREYFGEFGEIEAIELPMDPKLNKRRGFVFITFKEEEPVKKVLEKKFHTVSGSKCEIKVAQPKEVYQQQQYGSGGRGNRNRGNRGSGGGGGGGGQSQSWNQGYGNYWNQGYGYQQGYGPGYGGYDYSPYGYYGYGPGYDYSQGSTNYGKSQRRGGHQNNYKPY</sequence>
<protein>
    <recommendedName>
        <fullName>Heterogeneous nuclear ribonucleoprotein A/B</fullName>
        <shortName>hnRNP A/B</shortName>
    </recommendedName>
    <alternativeName>
        <fullName>APOBEC1-binding protein 1</fullName>
        <shortName>ABBP-1</shortName>
    </alternativeName>
</protein>
<name>ROAA_HUMAN</name>
<feature type="chain" id="PRO_0000081492" description="Heterogeneous nuclear ribonucleoprotein A/B">
    <location>
        <begin position="1"/>
        <end position="332"/>
    </location>
</feature>
<feature type="domain" description="RRM 1" evidence="2">
    <location>
        <begin position="69"/>
        <end position="154"/>
    </location>
</feature>
<feature type="domain" description="RRM 2" evidence="2">
    <location>
        <begin position="153"/>
        <end position="233"/>
    </location>
</feature>
<feature type="region of interest" description="Disordered" evidence="3">
    <location>
        <begin position="1"/>
        <end position="66"/>
    </location>
</feature>
<feature type="region of interest" description="Disordered" evidence="3">
    <location>
        <begin position="235"/>
        <end position="268"/>
    </location>
</feature>
<feature type="region of interest" description="Disordered" evidence="3">
    <location>
        <begin position="311"/>
        <end position="332"/>
    </location>
</feature>
<feature type="compositionally biased region" description="Low complexity" evidence="3">
    <location>
        <begin position="29"/>
        <end position="49"/>
    </location>
</feature>
<feature type="compositionally biased region" description="Gly residues" evidence="3">
    <location>
        <begin position="253"/>
        <end position="264"/>
    </location>
</feature>
<feature type="modified residue" description="Phosphoserine" evidence="16 18">
    <location>
        <position position="81"/>
    </location>
</feature>
<feature type="modified residue" description="N6-acetyllysine" evidence="1">
    <location>
        <position position="215"/>
    </location>
</feature>
<feature type="modified residue" description="Phosphoserine" evidence="11 12 14 15 16">
    <location>
        <position position="242"/>
    </location>
</feature>
<feature type="modified residue" description="Dimethylated arginine; alternate" evidence="5">
    <location>
        <position position="245"/>
    </location>
</feature>
<feature type="modified residue" description="Omega-N-methylarginine; alternate" evidence="5">
    <location>
        <position position="245"/>
    </location>
</feature>
<feature type="modified residue" description="Omega-N-methylarginine" evidence="1">
    <location>
        <position position="250"/>
    </location>
</feature>
<feature type="modified residue" description="Omega-N-methylarginine" evidence="1">
    <location>
        <position position="253"/>
    </location>
</feature>
<feature type="modified residue" description="N6-acetyllysine" evidence="1">
    <location>
        <position position="318"/>
    </location>
</feature>
<feature type="modified residue" description="Asymmetric dimethylarginine; alternate" evidence="1">
    <location>
        <position position="322"/>
    </location>
</feature>
<feature type="modified residue" description="Dimethylated arginine; alternate" evidence="10">
    <location>
        <position position="322"/>
    </location>
</feature>
<feature type="modified residue" description="Omega-N-methylarginine; alternate" evidence="17">
    <location>
        <position position="322"/>
    </location>
</feature>
<feature type="cross-link" description="Glycyl lysine isopeptide (Lys-Gly) (interchain with G-Cter in SUMO2)" evidence="19">
    <location>
        <position position="130"/>
    </location>
</feature>
<feature type="cross-link" description="Glycyl lysine isopeptide (Lys-Gly) (interchain with G-Cter in SUMO2)" evidence="19">
    <location>
        <position position="203"/>
    </location>
</feature>
<feature type="splice variant" id="VSP_007826" description="In isoform 2, isoform 3 and isoform 4." evidence="6 7 8">
    <original>ASRGRGW</original>
    <variation>GESPAGAG</variation>
    <location>
        <begin position="26"/>
        <end position="32"/>
    </location>
</feature>
<feature type="splice variant" id="VSP_007828" description="In isoform 2 and isoform 3." evidence="6 7">
    <original>SP</original>
    <variation>A</variation>
    <location>
        <begin position="164"/>
        <end position="165"/>
    </location>
</feature>
<feature type="splice variant" id="VSP_007829" description="In isoform 3 and isoform 4." evidence="6 7 8">
    <location>
        <begin position="264"/>
        <end position="310"/>
    </location>
</feature>
<feature type="strand" evidence="20">
    <location>
        <begin position="70"/>
        <end position="74"/>
    </location>
</feature>
<feature type="helix" evidence="20">
    <location>
        <begin position="82"/>
        <end position="89"/>
    </location>
</feature>
<feature type="turn" evidence="20">
    <location>
        <begin position="90"/>
        <end position="92"/>
    </location>
</feature>
<feature type="strand" evidence="20">
    <location>
        <begin position="95"/>
        <end position="102"/>
    </location>
</feature>
<feature type="turn" evidence="20">
    <location>
        <begin position="104"/>
        <end position="106"/>
    </location>
</feature>
<feature type="strand" evidence="20">
    <location>
        <begin position="109"/>
        <end position="119"/>
    </location>
</feature>
<feature type="helix" evidence="20">
    <location>
        <begin position="121"/>
        <end position="128"/>
    </location>
</feature>
<feature type="strand" evidence="20">
    <location>
        <begin position="132"/>
        <end position="134"/>
    </location>
</feature>
<feature type="strand" evidence="20">
    <location>
        <begin position="137"/>
        <end position="143"/>
    </location>
</feature>
<feature type="modified residue" description="Omega-N-methylarginine" evidence="17">
    <location sequence="Q99729-3">
        <position position="250"/>
    </location>
</feature>
<feature type="modified residue" description="Omega-N-methylarginine" evidence="17">
    <location sequence="Q99729-3">
        <position position="253"/>
    </location>
</feature>
<feature type="modified residue" description="Phosphoserine" evidence="14 15">
    <location sequence="Q99729-3">
        <position position="255"/>
    </location>
</feature>
<feature type="modified residue" description="N6-acetyllysine" evidence="13">
    <location sequence="Q99729-3">
        <position position="271"/>
    </location>
</feature>
<feature type="modified residue" description="Omega-N-methylarginine" evidence="17">
    <location sequence="Q99729-4">
        <position position="251"/>
    </location>
</feature>
<feature type="modified residue" description="Omega-N-methylarginine" evidence="17">
    <location sequence="Q99729-4">
        <position position="254"/>
    </location>
</feature>
<feature type="modified residue" description="Phosphoserine" evidence="14 15">
    <location sequence="Q99729-4">
        <position position="256"/>
    </location>
</feature>
<feature type="modified residue" description="N6-acetyllysine" evidence="13">
    <location sequence="Q99729-4">
        <position position="272"/>
    </location>
</feature>